<sequence>MTKLIFMGTPDFSATVLKGLLTDDRYEILAVVTQPDRAVGRKKVIQETPVKQAAKEAGLSIYQPEKLSGSPEMEDLMKLGADGIVTAAFGQFLPSKLLDSMDFAVNVHASLLPRHRGGAPIHYALIQGDEEAGVTIMEMVKEMDAGDMISRRSIPITDEDNVGTLFEKLALVGRDLLLDTLPAYIAGDIKPEPQDTSQVTFSPNIKSEEEKLNWNKTNRQLFNQIRGMNPWPVAHTFLKGDRFKIYEALPVEGQGNPGEILSIGKKELIVATAEGALSLKQVQPAGKPKMDIASFLNGVGRTLTVGERFGD</sequence>
<dbReference type="EC" id="2.1.2.9" evidence="1"/>
<dbReference type="EMBL" id="AE007317">
    <property type="protein sequence ID" value="AAL00383.1"/>
    <property type="molecule type" value="Genomic_DNA"/>
</dbReference>
<dbReference type="PIR" id="B98069">
    <property type="entry name" value="B98069"/>
</dbReference>
<dbReference type="RefSeq" id="NP_359172.1">
    <property type="nucleotide sequence ID" value="NC_003098.1"/>
</dbReference>
<dbReference type="RefSeq" id="WP_000163696.1">
    <property type="nucleotide sequence ID" value="NC_003098.1"/>
</dbReference>
<dbReference type="SMR" id="Q8DNR7"/>
<dbReference type="STRING" id="171101.spr1580"/>
<dbReference type="KEGG" id="spr:spr1580"/>
<dbReference type="PATRIC" id="fig|171101.6.peg.1707"/>
<dbReference type="eggNOG" id="COG0223">
    <property type="taxonomic scope" value="Bacteria"/>
</dbReference>
<dbReference type="HOGENOM" id="CLU_033347_1_1_9"/>
<dbReference type="Proteomes" id="UP000000586">
    <property type="component" value="Chromosome"/>
</dbReference>
<dbReference type="GO" id="GO:0005829">
    <property type="term" value="C:cytosol"/>
    <property type="evidence" value="ECO:0000318"/>
    <property type="project" value="GO_Central"/>
</dbReference>
<dbReference type="GO" id="GO:0004479">
    <property type="term" value="F:methionyl-tRNA formyltransferase activity"/>
    <property type="evidence" value="ECO:0000318"/>
    <property type="project" value="GO_Central"/>
</dbReference>
<dbReference type="GO" id="GO:0071951">
    <property type="term" value="P:conversion of methionyl-tRNA to N-formyl-methionyl-tRNA"/>
    <property type="evidence" value="ECO:0000318"/>
    <property type="project" value="GO_Central"/>
</dbReference>
<dbReference type="CDD" id="cd08646">
    <property type="entry name" value="FMT_core_Met-tRNA-FMT_N"/>
    <property type="match status" value="1"/>
</dbReference>
<dbReference type="CDD" id="cd08704">
    <property type="entry name" value="Met_tRNA_FMT_C"/>
    <property type="match status" value="1"/>
</dbReference>
<dbReference type="FunFam" id="3.10.25.10:FF:000004">
    <property type="entry name" value="Methionyl-tRNA formyltransferase"/>
    <property type="match status" value="1"/>
</dbReference>
<dbReference type="FunFam" id="3.40.50.170:FF:000004">
    <property type="entry name" value="Methionyl-tRNA formyltransferase"/>
    <property type="match status" value="1"/>
</dbReference>
<dbReference type="Gene3D" id="3.10.25.10">
    <property type="entry name" value="Formyl transferase, C-terminal domain"/>
    <property type="match status" value="1"/>
</dbReference>
<dbReference type="Gene3D" id="3.40.50.170">
    <property type="entry name" value="Formyl transferase, N-terminal domain"/>
    <property type="match status" value="1"/>
</dbReference>
<dbReference type="HAMAP" id="MF_00182">
    <property type="entry name" value="Formyl_trans"/>
    <property type="match status" value="1"/>
</dbReference>
<dbReference type="InterPro" id="IPR005794">
    <property type="entry name" value="Fmt"/>
</dbReference>
<dbReference type="InterPro" id="IPR005793">
    <property type="entry name" value="Formyl_trans_C"/>
</dbReference>
<dbReference type="InterPro" id="IPR037022">
    <property type="entry name" value="Formyl_trans_C_sf"/>
</dbReference>
<dbReference type="InterPro" id="IPR002376">
    <property type="entry name" value="Formyl_transf_N"/>
</dbReference>
<dbReference type="InterPro" id="IPR036477">
    <property type="entry name" value="Formyl_transf_N_sf"/>
</dbReference>
<dbReference type="InterPro" id="IPR011034">
    <property type="entry name" value="Formyl_transferase-like_C_sf"/>
</dbReference>
<dbReference type="InterPro" id="IPR001555">
    <property type="entry name" value="GART_AS"/>
</dbReference>
<dbReference type="InterPro" id="IPR044135">
    <property type="entry name" value="Met-tRNA-FMT_C"/>
</dbReference>
<dbReference type="InterPro" id="IPR041711">
    <property type="entry name" value="Met-tRNA-FMT_N"/>
</dbReference>
<dbReference type="NCBIfam" id="TIGR00460">
    <property type="entry name" value="fmt"/>
    <property type="match status" value="1"/>
</dbReference>
<dbReference type="PANTHER" id="PTHR11138">
    <property type="entry name" value="METHIONYL-TRNA FORMYLTRANSFERASE"/>
    <property type="match status" value="1"/>
</dbReference>
<dbReference type="PANTHER" id="PTHR11138:SF5">
    <property type="entry name" value="METHIONYL-TRNA FORMYLTRANSFERASE, MITOCHONDRIAL"/>
    <property type="match status" value="1"/>
</dbReference>
<dbReference type="Pfam" id="PF02911">
    <property type="entry name" value="Formyl_trans_C"/>
    <property type="match status" value="1"/>
</dbReference>
<dbReference type="Pfam" id="PF00551">
    <property type="entry name" value="Formyl_trans_N"/>
    <property type="match status" value="1"/>
</dbReference>
<dbReference type="SUPFAM" id="SSF50486">
    <property type="entry name" value="FMT C-terminal domain-like"/>
    <property type="match status" value="1"/>
</dbReference>
<dbReference type="SUPFAM" id="SSF53328">
    <property type="entry name" value="Formyltransferase"/>
    <property type="match status" value="1"/>
</dbReference>
<dbReference type="PROSITE" id="PS00373">
    <property type="entry name" value="GART"/>
    <property type="match status" value="1"/>
</dbReference>
<organism>
    <name type="scientific">Streptococcus pneumoniae (strain ATCC BAA-255 / R6)</name>
    <dbReference type="NCBI Taxonomy" id="171101"/>
    <lineage>
        <taxon>Bacteria</taxon>
        <taxon>Bacillati</taxon>
        <taxon>Bacillota</taxon>
        <taxon>Bacilli</taxon>
        <taxon>Lactobacillales</taxon>
        <taxon>Streptococcaceae</taxon>
        <taxon>Streptococcus</taxon>
    </lineage>
</organism>
<gene>
    <name evidence="1" type="primary">fmt</name>
    <name type="ordered locus">spr1580</name>
</gene>
<keyword id="KW-0648">Protein biosynthesis</keyword>
<keyword id="KW-1185">Reference proteome</keyword>
<keyword id="KW-0808">Transferase</keyword>
<feature type="chain" id="PRO_0000083059" description="Methionyl-tRNA formyltransferase">
    <location>
        <begin position="1"/>
        <end position="311"/>
    </location>
</feature>
<feature type="binding site" evidence="1">
    <location>
        <begin position="110"/>
        <end position="113"/>
    </location>
    <ligand>
        <name>(6S)-5,6,7,8-tetrahydrofolate</name>
        <dbReference type="ChEBI" id="CHEBI:57453"/>
    </ligand>
</feature>
<evidence type="ECO:0000255" key="1">
    <source>
        <dbReference type="HAMAP-Rule" id="MF_00182"/>
    </source>
</evidence>
<proteinExistence type="inferred from homology"/>
<reference key="1">
    <citation type="journal article" date="2001" name="J. Bacteriol.">
        <title>Genome of the bacterium Streptococcus pneumoniae strain R6.</title>
        <authorList>
            <person name="Hoskins J."/>
            <person name="Alborn W.E. Jr."/>
            <person name="Arnold J."/>
            <person name="Blaszczak L.C."/>
            <person name="Burgett S."/>
            <person name="DeHoff B.S."/>
            <person name="Estrem S.T."/>
            <person name="Fritz L."/>
            <person name="Fu D.-J."/>
            <person name="Fuller W."/>
            <person name="Geringer C."/>
            <person name="Gilmour R."/>
            <person name="Glass J.S."/>
            <person name="Khoja H."/>
            <person name="Kraft A.R."/>
            <person name="Lagace R.E."/>
            <person name="LeBlanc D.J."/>
            <person name="Lee L.N."/>
            <person name="Lefkowitz E.J."/>
            <person name="Lu J."/>
            <person name="Matsushima P."/>
            <person name="McAhren S.M."/>
            <person name="McHenney M."/>
            <person name="McLeaster K."/>
            <person name="Mundy C.W."/>
            <person name="Nicas T.I."/>
            <person name="Norris F.H."/>
            <person name="O'Gara M."/>
            <person name="Peery R.B."/>
            <person name="Robertson G.T."/>
            <person name="Rockey P."/>
            <person name="Sun P.-M."/>
            <person name="Winkler M.E."/>
            <person name="Yang Y."/>
            <person name="Young-Bellido M."/>
            <person name="Zhao G."/>
            <person name="Zook C.A."/>
            <person name="Baltz R.H."/>
            <person name="Jaskunas S.R."/>
            <person name="Rosteck P.R. Jr."/>
            <person name="Skatrud P.L."/>
            <person name="Glass J.I."/>
        </authorList>
    </citation>
    <scope>NUCLEOTIDE SEQUENCE [LARGE SCALE GENOMIC DNA]</scope>
    <source>
        <strain>ATCC BAA-255 / R6</strain>
    </source>
</reference>
<accession>Q8DNR7</accession>
<protein>
    <recommendedName>
        <fullName evidence="1">Methionyl-tRNA formyltransferase</fullName>
        <ecNumber evidence="1">2.1.2.9</ecNumber>
    </recommendedName>
</protein>
<comment type="function">
    <text evidence="1">Attaches a formyl group to the free amino group of methionyl-tRNA(fMet). The formyl group appears to play a dual role in the initiator identity of N-formylmethionyl-tRNA by promoting its recognition by IF2 and preventing the misappropriation of this tRNA by the elongation apparatus.</text>
</comment>
<comment type="catalytic activity">
    <reaction evidence="1">
        <text>L-methionyl-tRNA(fMet) + (6R)-10-formyltetrahydrofolate = N-formyl-L-methionyl-tRNA(fMet) + (6S)-5,6,7,8-tetrahydrofolate + H(+)</text>
        <dbReference type="Rhea" id="RHEA:24380"/>
        <dbReference type="Rhea" id="RHEA-COMP:9952"/>
        <dbReference type="Rhea" id="RHEA-COMP:9953"/>
        <dbReference type="ChEBI" id="CHEBI:15378"/>
        <dbReference type="ChEBI" id="CHEBI:57453"/>
        <dbReference type="ChEBI" id="CHEBI:78530"/>
        <dbReference type="ChEBI" id="CHEBI:78844"/>
        <dbReference type="ChEBI" id="CHEBI:195366"/>
        <dbReference type="EC" id="2.1.2.9"/>
    </reaction>
</comment>
<comment type="similarity">
    <text evidence="1">Belongs to the Fmt family.</text>
</comment>
<name>FMT_STRR6</name>